<name>RBFA_SALAI</name>
<protein>
    <recommendedName>
        <fullName evidence="1">Ribosome-binding factor A</fullName>
    </recommendedName>
</protein>
<accession>A8M748</accession>
<reference key="1">
    <citation type="submission" date="2007-10" db="EMBL/GenBank/DDBJ databases">
        <title>Complete sequence of Salinispora arenicola CNS-205.</title>
        <authorList>
            <consortium name="US DOE Joint Genome Institute"/>
            <person name="Copeland A."/>
            <person name="Lucas S."/>
            <person name="Lapidus A."/>
            <person name="Barry K."/>
            <person name="Glavina del Rio T."/>
            <person name="Dalin E."/>
            <person name="Tice H."/>
            <person name="Pitluck S."/>
            <person name="Foster B."/>
            <person name="Schmutz J."/>
            <person name="Larimer F."/>
            <person name="Land M."/>
            <person name="Hauser L."/>
            <person name="Kyrpides N."/>
            <person name="Ivanova N."/>
            <person name="Jensen P.R."/>
            <person name="Moore B.S."/>
            <person name="Penn K."/>
            <person name="Jenkins C."/>
            <person name="Udwary D."/>
            <person name="Xiang L."/>
            <person name="Gontang E."/>
            <person name="Richardson P."/>
        </authorList>
    </citation>
    <scope>NUCLEOTIDE SEQUENCE [LARGE SCALE GENOMIC DNA]</scope>
    <source>
        <strain>CNS-205</strain>
    </source>
</reference>
<comment type="function">
    <text evidence="1">One of several proteins that assist in the late maturation steps of the functional core of the 30S ribosomal subunit. Associates with free 30S ribosomal subunits (but not with 30S subunits that are part of 70S ribosomes or polysomes). Required for efficient processing of 16S rRNA. May interact with the 5'-terminal helix region of 16S rRNA.</text>
</comment>
<comment type="subunit">
    <text evidence="1">Monomer. Binds 30S ribosomal subunits, but not 50S ribosomal subunits or 70S ribosomes.</text>
</comment>
<comment type="subcellular location">
    <subcellularLocation>
        <location evidence="1">Cytoplasm</location>
    </subcellularLocation>
</comment>
<comment type="similarity">
    <text evidence="1">Belongs to the RbfA family.</text>
</comment>
<evidence type="ECO:0000255" key="1">
    <source>
        <dbReference type="HAMAP-Rule" id="MF_00003"/>
    </source>
</evidence>
<evidence type="ECO:0000256" key="2">
    <source>
        <dbReference type="SAM" id="MobiDB-lite"/>
    </source>
</evidence>
<sequence length="156" mass="17036">MSDPAKVRRHAERVRELVASVVRSQIKDPRLGMITITDARITADLRDATVFYTVLGDTAAQSGTAAALESAKGMLRSTVGKALGLRHSPTLTFVLDDVQDQVKHIDDLLAQARHADAEVQRLAARAEYAGEAQPYRVEEEPGDSEDETPPSSQDQR</sequence>
<keyword id="KW-0963">Cytoplasm</keyword>
<keyword id="KW-0690">Ribosome biogenesis</keyword>
<gene>
    <name evidence="1" type="primary">rbfA</name>
    <name type="ordered locus">Sare_1329</name>
</gene>
<dbReference type="EMBL" id="CP000850">
    <property type="protein sequence ID" value="ABV97230.1"/>
    <property type="molecule type" value="Genomic_DNA"/>
</dbReference>
<dbReference type="SMR" id="A8M748"/>
<dbReference type="STRING" id="391037.Sare_1329"/>
<dbReference type="KEGG" id="saq:Sare_1329"/>
<dbReference type="PATRIC" id="fig|391037.6.peg.1351"/>
<dbReference type="eggNOG" id="COG0858">
    <property type="taxonomic scope" value="Bacteria"/>
</dbReference>
<dbReference type="HOGENOM" id="CLU_089475_0_0_11"/>
<dbReference type="OrthoDB" id="307788at2"/>
<dbReference type="GO" id="GO:0005829">
    <property type="term" value="C:cytosol"/>
    <property type="evidence" value="ECO:0007669"/>
    <property type="project" value="TreeGrafter"/>
</dbReference>
<dbReference type="GO" id="GO:0043024">
    <property type="term" value="F:ribosomal small subunit binding"/>
    <property type="evidence" value="ECO:0007669"/>
    <property type="project" value="TreeGrafter"/>
</dbReference>
<dbReference type="GO" id="GO:0030490">
    <property type="term" value="P:maturation of SSU-rRNA"/>
    <property type="evidence" value="ECO:0007669"/>
    <property type="project" value="UniProtKB-UniRule"/>
</dbReference>
<dbReference type="Gene3D" id="3.30.300.20">
    <property type="match status" value="1"/>
</dbReference>
<dbReference type="HAMAP" id="MF_00003">
    <property type="entry name" value="RbfA"/>
    <property type="match status" value="1"/>
</dbReference>
<dbReference type="InterPro" id="IPR015946">
    <property type="entry name" value="KH_dom-like_a/b"/>
</dbReference>
<dbReference type="InterPro" id="IPR000238">
    <property type="entry name" value="RbfA"/>
</dbReference>
<dbReference type="InterPro" id="IPR023799">
    <property type="entry name" value="RbfA_dom_sf"/>
</dbReference>
<dbReference type="InterPro" id="IPR020053">
    <property type="entry name" value="Ribosome-bd_factorA_CS"/>
</dbReference>
<dbReference type="NCBIfam" id="TIGR00082">
    <property type="entry name" value="rbfA"/>
    <property type="match status" value="1"/>
</dbReference>
<dbReference type="PANTHER" id="PTHR33515">
    <property type="entry name" value="RIBOSOME-BINDING FACTOR A, CHLOROPLASTIC-RELATED"/>
    <property type="match status" value="1"/>
</dbReference>
<dbReference type="PANTHER" id="PTHR33515:SF1">
    <property type="entry name" value="RIBOSOME-BINDING FACTOR A, CHLOROPLASTIC-RELATED"/>
    <property type="match status" value="1"/>
</dbReference>
<dbReference type="Pfam" id="PF02033">
    <property type="entry name" value="RBFA"/>
    <property type="match status" value="1"/>
</dbReference>
<dbReference type="SUPFAM" id="SSF89919">
    <property type="entry name" value="Ribosome-binding factor A, RbfA"/>
    <property type="match status" value="1"/>
</dbReference>
<dbReference type="PROSITE" id="PS01319">
    <property type="entry name" value="RBFA"/>
    <property type="match status" value="1"/>
</dbReference>
<organism>
    <name type="scientific">Salinispora arenicola (strain CNS-205)</name>
    <dbReference type="NCBI Taxonomy" id="391037"/>
    <lineage>
        <taxon>Bacteria</taxon>
        <taxon>Bacillati</taxon>
        <taxon>Actinomycetota</taxon>
        <taxon>Actinomycetes</taxon>
        <taxon>Micromonosporales</taxon>
        <taxon>Micromonosporaceae</taxon>
        <taxon>Salinispora</taxon>
    </lineage>
</organism>
<proteinExistence type="inferred from homology"/>
<feature type="chain" id="PRO_1000073776" description="Ribosome-binding factor A">
    <location>
        <begin position="1"/>
        <end position="156"/>
    </location>
</feature>
<feature type="region of interest" description="Disordered" evidence="2">
    <location>
        <begin position="129"/>
        <end position="156"/>
    </location>
</feature>